<comment type="function">
    <text evidence="1">Controls the transcription of genes involved in arginine and lysine metabolism.</text>
</comment>
<comment type="subunit">
    <text evidence="1">Homodimer.</text>
</comment>
<comment type="similarity">
    <text evidence="2">Belongs to the LysR transcriptional regulatory family.</text>
</comment>
<protein>
    <recommendedName>
        <fullName evidence="1">HTH-type transcriptional regulator ArgP</fullName>
    </recommendedName>
</protein>
<evidence type="ECO:0000255" key="1">
    <source>
        <dbReference type="HAMAP-Rule" id="MF_00513"/>
    </source>
</evidence>
<evidence type="ECO:0000305" key="2"/>
<feature type="chain" id="PRO_1000127266" description="HTH-type transcriptional regulator ArgP">
    <location>
        <begin position="1"/>
        <end position="297"/>
    </location>
</feature>
<feature type="domain" description="HTH lysR-type" evidence="1">
    <location>
        <begin position="4"/>
        <end position="60"/>
    </location>
</feature>
<feature type="DNA-binding region" description="H-T-H motif" evidence="1">
    <location>
        <begin position="21"/>
        <end position="40"/>
    </location>
</feature>
<dbReference type="EMBL" id="CU928161">
    <property type="protein sequence ID" value="CAR04430.1"/>
    <property type="molecule type" value="Genomic_DNA"/>
</dbReference>
<dbReference type="RefSeq" id="WP_000828351.1">
    <property type="nucleotide sequence ID" value="NC_011742.1"/>
</dbReference>
<dbReference type="SMR" id="B7MMA1"/>
<dbReference type="GeneID" id="93779084"/>
<dbReference type="KEGG" id="ecz:ECS88_3195"/>
<dbReference type="HOGENOM" id="CLU_063829_0_0_6"/>
<dbReference type="Proteomes" id="UP000000747">
    <property type="component" value="Chromosome"/>
</dbReference>
<dbReference type="GO" id="GO:0003677">
    <property type="term" value="F:DNA binding"/>
    <property type="evidence" value="ECO:0007669"/>
    <property type="project" value="UniProtKB-UniRule"/>
</dbReference>
<dbReference type="GO" id="GO:0003700">
    <property type="term" value="F:DNA-binding transcription factor activity"/>
    <property type="evidence" value="ECO:0007669"/>
    <property type="project" value="UniProtKB-UniRule"/>
</dbReference>
<dbReference type="CDD" id="cd08428">
    <property type="entry name" value="PBP2_IciA_ArgP"/>
    <property type="match status" value="1"/>
</dbReference>
<dbReference type="FunFam" id="1.10.10.10:FF:000061">
    <property type="entry name" value="HTH-type transcriptional regulator ArgP"/>
    <property type="match status" value="1"/>
</dbReference>
<dbReference type="FunFam" id="3.40.190.290:FF:000002">
    <property type="entry name" value="HTH-type transcriptional regulator ArgP"/>
    <property type="match status" value="1"/>
</dbReference>
<dbReference type="Gene3D" id="3.40.190.290">
    <property type="match status" value="1"/>
</dbReference>
<dbReference type="Gene3D" id="1.10.10.10">
    <property type="entry name" value="Winged helix-like DNA-binding domain superfamily/Winged helix DNA-binding domain"/>
    <property type="match status" value="1"/>
</dbReference>
<dbReference type="HAMAP" id="MF_00513">
    <property type="entry name" value="HTH_type_ArgP"/>
    <property type="match status" value="1"/>
</dbReference>
<dbReference type="InterPro" id="IPR017685">
    <property type="entry name" value="ArgP"/>
</dbReference>
<dbReference type="InterPro" id="IPR023490">
    <property type="entry name" value="ArgP_gammaproteobact"/>
</dbReference>
<dbReference type="InterPro" id="IPR050176">
    <property type="entry name" value="LTTR"/>
</dbReference>
<dbReference type="InterPro" id="IPR005119">
    <property type="entry name" value="LysR_subst-bd"/>
</dbReference>
<dbReference type="InterPro" id="IPR000847">
    <property type="entry name" value="Tscrpt_reg_HTH_LysR"/>
</dbReference>
<dbReference type="InterPro" id="IPR036388">
    <property type="entry name" value="WH-like_DNA-bd_sf"/>
</dbReference>
<dbReference type="InterPro" id="IPR036390">
    <property type="entry name" value="WH_DNA-bd_sf"/>
</dbReference>
<dbReference type="NCBIfam" id="TIGR03298">
    <property type="entry name" value="argP"/>
    <property type="match status" value="1"/>
</dbReference>
<dbReference type="NCBIfam" id="NF002964">
    <property type="entry name" value="PRK03635.1"/>
    <property type="match status" value="1"/>
</dbReference>
<dbReference type="NCBIfam" id="NF009888">
    <property type="entry name" value="PRK13348.1"/>
    <property type="match status" value="1"/>
</dbReference>
<dbReference type="PANTHER" id="PTHR30579:SF2">
    <property type="entry name" value="HTH-TYPE TRANSCRIPTIONAL REGULATOR ARGP"/>
    <property type="match status" value="1"/>
</dbReference>
<dbReference type="PANTHER" id="PTHR30579">
    <property type="entry name" value="TRANSCRIPTIONAL REGULATOR"/>
    <property type="match status" value="1"/>
</dbReference>
<dbReference type="Pfam" id="PF00126">
    <property type="entry name" value="HTH_1"/>
    <property type="match status" value="1"/>
</dbReference>
<dbReference type="Pfam" id="PF03466">
    <property type="entry name" value="LysR_substrate"/>
    <property type="match status" value="1"/>
</dbReference>
<dbReference type="PRINTS" id="PR00039">
    <property type="entry name" value="HTHLYSR"/>
</dbReference>
<dbReference type="SUPFAM" id="SSF53850">
    <property type="entry name" value="Periplasmic binding protein-like II"/>
    <property type="match status" value="1"/>
</dbReference>
<dbReference type="SUPFAM" id="SSF46785">
    <property type="entry name" value="Winged helix' DNA-binding domain"/>
    <property type="match status" value="1"/>
</dbReference>
<dbReference type="PROSITE" id="PS50931">
    <property type="entry name" value="HTH_LYSR"/>
    <property type="match status" value="1"/>
</dbReference>
<proteinExistence type="inferred from homology"/>
<reference key="1">
    <citation type="journal article" date="2009" name="PLoS Genet.">
        <title>Organised genome dynamics in the Escherichia coli species results in highly diverse adaptive paths.</title>
        <authorList>
            <person name="Touchon M."/>
            <person name="Hoede C."/>
            <person name="Tenaillon O."/>
            <person name="Barbe V."/>
            <person name="Baeriswyl S."/>
            <person name="Bidet P."/>
            <person name="Bingen E."/>
            <person name="Bonacorsi S."/>
            <person name="Bouchier C."/>
            <person name="Bouvet O."/>
            <person name="Calteau A."/>
            <person name="Chiapello H."/>
            <person name="Clermont O."/>
            <person name="Cruveiller S."/>
            <person name="Danchin A."/>
            <person name="Diard M."/>
            <person name="Dossat C."/>
            <person name="Karoui M.E."/>
            <person name="Frapy E."/>
            <person name="Garry L."/>
            <person name="Ghigo J.M."/>
            <person name="Gilles A.M."/>
            <person name="Johnson J."/>
            <person name="Le Bouguenec C."/>
            <person name="Lescat M."/>
            <person name="Mangenot S."/>
            <person name="Martinez-Jehanne V."/>
            <person name="Matic I."/>
            <person name="Nassif X."/>
            <person name="Oztas S."/>
            <person name="Petit M.A."/>
            <person name="Pichon C."/>
            <person name="Rouy Z."/>
            <person name="Ruf C.S."/>
            <person name="Schneider D."/>
            <person name="Tourret J."/>
            <person name="Vacherie B."/>
            <person name="Vallenet D."/>
            <person name="Medigue C."/>
            <person name="Rocha E.P.C."/>
            <person name="Denamur E."/>
        </authorList>
    </citation>
    <scope>NUCLEOTIDE SEQUENCE [LARGE SCALE GENOMIC DNA]</scope>
    <source>
        <strain>S88 / ExPEC</strain>
    </source>
</reference>
<gene>
    <name evidence="1" type="primary">argP</name>
    <name type="synonym">iciA</name>
    <name type="ordered locus">ECS88_3195</name>
</gene>
<organism>
    <name type="scientific">Escherichia coli O45:K1 (strain S88 / ExPEC)</name>
    <dbReference type="NCBI Taxonomy" id="585035"/>
    <lineage>
        <taxon>Bacteria</taxon>
        <taxon>Pseudomonadati</taxon>
        <taxon>Pseudomonadota</taxon>
        <taxon>Gammaproteobacteria</taxon>
        <taxon>Enterobacterales</taxon>
        <taxon>Enterobacteriaceae</taxon>
        <taxon>Escherichia</taxon>
    </lineage>
</organism>
<sequence length="297" mass="33472">MKRPDYRTLQALDAVIRERGFERAAQKLCITQSAVSQRIKQLENMFGQPLLVRTVPPRPTEQGQKLLALLRQVELLEEEWLGDEQTGSTPLLLSLAVNADSLATWLLPALAPVLADSPIRLNLQVEDETRTQERLRRGEVVGAVSIQHQALPSCLVDKLGALDYLFVSSKPFAEKYFPNGVTRSALLKAPVVAFDHLDDMHQAFLQQNFDLPPGSVPCHIVNSSEAFVQLARQGTTCCMIPHLQIEKELASGELIDLTPGLFQRRMLYWHRFAPESRMMRKVTDALLDYGHKVLRQD</sequence>
<name>ARGP_ECO45</name>
<keyword id="KW-0238">DNA-binding</keyword>
<keyword id="KW-1185">Reference proteome</keyword>
<keyword id="KW-0804">Transcription</keyword>
<keyword id="KW-0805">Transcription regulation</keyword>
<accession>B7MMA1</accession>